<comment type="function">
    <text evidence="2">Isoform large T antigen is a key early protein essential for both driving viral replication and inducing cellular transformation. Plays a role in viral genome replication by driving entry of quiescent cells into the cell cycle and by autoregulating the synthesis of viral early mRNA. Displays highly oncogenic activities by corrupting the host cellular checkpoint mechanisms that guard cell division and the transcription, replication, and repair of DNA. Participates in the modulation of cellular gene expression preceeding viral DNA replication. This step involves binding to host key cell cycle regulators retinoblastoma protein RB1/pRb and TP53. Induces the disassembly of host E2F1 transcription factors from RB1, thus promoting transcriptional activation of E2F1-regulated S-phase genes. Inhibits host TP53 binding to DNA, abrogating the ability of TP53 to stimulate gene expression. Plays the role of a TFIID-associated factor (TAF) in transcription initiation for all three RNA polymerases, by stabilizing the TBP-TFIIA complex on promoters. Initiates viral DNA replication and unwinding via interactions with the viral origin of replication. Binds two adjacent sites in the SV40 origin. The replication fork movement is facilitated by Large T antigen helicase activity. Has processive 3'-5' DNA helicase activity which requires a short 3' single-stranded region and ATP. Activates the transcription of viral late mRNA, through host TBP and TFIIA stabilization. Interferes with histone deacetylation mediated by HDAC1, leading to activation of transcription (By similarity).</text>
</comment>
<comment type="catalytic activity">
    <reaction evidence="2">
        <text>Couples ATP hydrolysis with the unwinding of duplex DNA by translocating in the 3'-5' direction.</text>
        <dbReference type="EC" id="5.6.2.4"/>
    </reaction>
</comment>
<comment type="catalytic activity">
    <reaction evidence="2">
        <text>ATP + H2O = ADP + phosphate + H(+)</text>
        <dbReference type="Rhea" id="RHEA:13065"/>
        <dbReference type="ChEBI" id="CHEBI:15377"/>
        <dbReference type="ChEBI" id="CHEBI:15378"/>
        <dbReference type="ChEBI" id="CHEBI:30616"/>
        <dbReference type="ChEBI" id="CHEBI:43474"/>
        <dbReference type="ChEBI" id="CHEBI:456216"/>
        <dbReference type="EC" id="5.6.2.4"/>
    </reaction>
</comment>
<comment type="cofactor">
    <cofactor evidence="2">
        <name>Mg(2+)</name>
        <dbReference type="ChEBI" id="CHEBI:18420"/>
    </cofactor>
    <text evidence="2">DNA helicase activity requires Mg(2+).</text>
</comment>
<comment type="subunit">
    <text evidence="1">Forms homohexamers in the presence of ATP. Interacts with host HDAC1. Interacts (via LXCXE domain) with host RB1; the interaction induces the aberrant dissociation of RB1-E2F1 complex thereby disrupting RB1's activity. Interacts (via LXCXE domain) with host pRB-related proteins RBL1 and RBL2. Interacts (via C-terminus) with host TOP1 and POLA1 allowing DNA replication. Interacts with host preinitiation complex components TBP, TFIIA and TFIID to regulate transcription initiation (By similarity).</text>
</comment>
<comment type="subcellular location">
    <subcellularLocation>
        <location evidence="1">Host nucleus</location>
    </subcellularLocation>
</comment>
<comment type="alternative products">
    <event type="alternative splicing"/>
    <isoform>
        <id>P03075-1</id>
        <name>Large T antigen</name>
        <sequence type="displayed"/>
    </isoform>
    <isoform>
        <id>P03080-1</id>
        <name>Small t antigen</name>
        <sequence type="external"/>
    </isoform>
    <isoform>
        <id>P03079-1</id>
        <name>Middle T antigen</name>
        <sequence type="external"/>
    </isoform>
</comment>
<comment type="domain">
    <text evidence="1">The J domain is essential for multiple viral activities, including virion assembly, viral DNA replication, transformation and transcriptional activation.</text>
</comment>
<comment type="domain">
    <text evidence="1">The LXCXE motif specifically binds to host pRB, RBL1, and RBL2.</text>
</comment>
<comment type="domain">
    <text evidence="1">The zinc finger region contributes to protein-protein interactions essential for the assembly of stable T-antigen hexamers at the origin of replication. The hexamers are required for subsequent alterations in the structure of origin DNA (By similarity).</text>
</comment>
<comment type="domain">
    <text evidence="1">The ATP binding/ATPase domain is required for proper hexamer assembly and helicase activity.</text>
</comment>
<comment type="PTM">
    <text evidence="1">Phosphorylated on both serine and threonine residues. Small t antigen inhibits the dephosphorylation by the AC form of PP2A (By similarity).</text>
</comment>
<comment type="PTM">
    <text evidence="1">O-Glycosylated near the C-terminal region.</text>
</comment>
<comment type="PTM">
    <text evidence="1">Acetylated by CBP in a TP53-dependent manner.</text>
</comment>
<feature type="chain" id="PRO_0000115039" description="Large T antigen">
    <location>
        <begin position="1"/>
        <end position="751"/>
    </location>
</feature>
<feature type="domain" description="J">
    <location>
        <begin position="12"/>
        <end position="75"/>
    </location>
</feature>
<feature type="domain" description="SF3 helicase" evidence="3">
    <location>
        <begin position="522"/>
        <end position="682"/>
    </location>
</feature>
<feature type="DNA-binding region" description="T-ag OBD" evidence="4">
    <location>
        <begin position="264"/>
        <end position="380"/>
    </location>
</feature>
<feature type="zinc finger region" description="T-ag D1-type" evidence="5">
    <location>
        <begin position="389"/>
        <end position="483"/>
    </location>
</feature>
<feature type="region of interest" description="Binding to host RB1 protein and transforming activity" evidence="1">
    <location>
        <begin position="130"/>
        <end position="134"/>
    </location>
</feature>
<feature type="region of interest" description="Disordered" evidence="6">
    <location>
        <begin position="133"/>
        <end position="260"/>
    </location>
</feature>
<feature type="short sequence motif" description="Nuclear localization signal" evidence="1">
    <location>
        <begin position="251"/>
        <end position="257"/>
    </location>
</feature>
<feature type="compositionally biased region" description="Acidic residues" evidence="6">
    <location>
        <begin position="133"/>
        <end position="143"/>
    </location>
</feature>
<feature type="compositionally biased region" description="Low complexity" evidence="6">
    <location>
        <begin position="155"/>
        <end position="165"/>
    </location>
</feature>
<feature type="compositionally biased region" description="Polar residues" evidence="6">
    <location>
        <begin position="219"/>
        <end position="232"/>
    </location>
</feature>
<feature type="binding site" evidence="5">
    <location>
        <position position="426"/>
    </location>
    <ligand>
        <name>Zn(2+)</name>
        <dbReference type="ChEBI" id="CHEBI:29105"/>
    </ligand>
</feature>
<feature type="binding site" evidence="5">
    <location>
        <position position="429"/>
    </location>
    <ligand>
        <name>Zn(2+)</name>
        <dbReference type="ChEBI" id="CHEBI:29105"/>
    </ligand>
</feature>
<feature type="binding site" evidence="5">
    <location>
        <position position="439"/>
    </location>
    <ligand>
        <name>Zn(2+)</name>
        <dbReference type="ChEBI" id="CHEBI:29105"/>
    </ligand>
</feature>
<feature type="binding site" evidence="5">
    <location>
        <position position="443"/>
    </location>
    <ligand>
        <name>Zn(2+)</name>
        <dbReference type="ChEBI" id="CHEBI:29105"/>
    </ligand>
</feature>
<feature type="binding site" evidence="3">
    <location>
        <begin position="548"/>
        <end position="555"/>
    </location>
    <ligand>
        <name>ATP</name>
        <dbReference type="ChEBI" id="CHEBI:30616"/>
    </ligand>
</feature>
<feature type="modified residue" description="N-acetylmethionine; by host" evidence="1">
    <location>
        <position position="1"/>
    </location>
</feature>
<feature type="modified residue" description="Phosphoserine; by host" evidence="1">
    <location>
        <position position="245"/>
    </location>
</feature>
<feature type="modified residue" description="Phosphothreonine; by host" evidence="1">
    <location>
        <position position="249"/>
    </location>
</feature>
<name>LT_POVHA</name>
<reference key="1">
    <citation type="journal article" date="1985" name="EMBO J.">
        <title>A new member of the polyomavirus family: the hamster papovavirus. Complete nucleotide sequence and transformation properties.</title>
        <authorList>
            <person name="Delmas V."/>
            <person name="Bastien C."/>
            <person name="Scherneck S."/>
            <person name="Feunteun J."/>
        </authorList>
    </citation>
    <scope>NUCLEOTIDE SEQUENCE [GENOMIC DNA]</scope>
</reference>
<organismHost>
    <name type="scientific">Mesocricetus auratus</name>
    <name type="common">Golden hamster</name>
    <dbReference type="NCBI Taxonomy" id="10036"/>
</organismHost>
<protein>
    <recommendedName>
        <fullName>Large T antigen</fullName>
        <shortName>LT</shortName>
        <shortName>LT-AG</shortName>
        <ecNumber evidence="2">5.6.2.4</ecNumber>
    </recommendedName>
    <alternativeName>
        <fullName evidence="7">DNA 3'-5' helicase large T antigen</fullName>
    </alternativeName>
</protein>
<sequence>MDRILTKEEKQALISLLDLEPQYWGDYGRMQKCYKKKCLQLHPDKGGNEELMQQLNTLWTKLKDGLYRVRLLLGPSQDPNASTSTSRPGEFYNPDTGGYWSYSYGSAGYSDQQKKYWEEFFSKWDVNEDLTCQEELSSSEDEFTPWHPNPPPSPVSISSDSSSSSCDEEYPRNSSRKRKRVHANGSPNTPIQPNKRAHTPGGGRTTIRGDTDIPRTPARESQSTFGSYFNSTEELEEEISQTQQSHHNTTPKKPPPTVSPDDFPTILRGFLSHAIFSNKTQNAFIIYSTKEKCEVLYEQIDKYNPDYKGIFIMKQTEAFVMFMTPGKHRVAAVKSYCCKFCTVSFLLCKAVTKPLELYNCVAKCDDFQILKENKPGLYHFEFCDEKKEVKQIDWNFLTSFAVENELDDPLVIMGHYLEFSQCESSCKKCAEALPRMKVHWANHSQHLENAELFLHCKQQKSICQQAADNVLARRRLKVLESTRQELLAERLNKLLDQLKDLSPVDKHLYLAGVAWYQCMFPDFEMMLLDILKLFTENVPKKRNVLFRGPVNSGKTSLAAAIMNLVGGVALNVNCPADKLNFELGVAIDKFAVVFEDVKGQTGDKRHLQSGLGINNLDNLRDYLDGSVKVNLEKKHVNKRSQIFPPCIVTANEYFFPQTLYARFHKVYNFEVKDFLAKSLEENSYMGRHRVCQSPLTMLIALLWNVPTENFDKSLKEKVETEKKVLSDMCNFTTFAEMCLNIQRGADPLEAL</sequence>
<proteinExistence type="inferred from homology"/>
<organism>
    <name type="scientific">Hamster polyomavirus</name>
    <name type="common">HaPyV</name>
    <name type="synonym">Mesocricetus auratus polyomavirus 1</name>
    <dbReference type="NCBI Taxonomy" id="1891729"/>
    <lineage>
        <taxon>Viruses</taxon>
        <taxon>Monodnaviria</taxon>
        <taxon>Shotokuvirae</taxon>
        <taxon>Cossaviricota</taxon>
        <taxon>Papovaviricetes</taxon>
        <taxon>Sepolyvirales</taxon>
        <taxon>Polyomaviridae</taxon>
        <taxon>Alphapolyomavirus</taxon>
    </lineage>
</organism>
<accession>P03075</accession>
<evidence type="ECO:0000250" key="1"/>
<evidence type="ECO:0000250" key="2">
    <source>
        <dbReference type="UniProtKB" id="P03070"/>
    </source>
</evidence>
<evidence type="ECO:0000255" key="3">
    <source>
        <dbReference type="PROSITE-ProRule" id="PRU00551"/>
    </source>
</evidence>
<evidence type="ECO:0000255" key="4">
    <source>
        <dbReference type="PROSITE-ProRule" id="PRU00620"/>
    </source>
</evidence>
<evidence type="ECO:0000255" key="5">
    <source>
        <dbReference type="PROSITE-ProRule" id="PRU00671"/>
    </source>
</evidence>
<evidence type="ECO:0000256" key="6">
    <source>
        <dbReference type="SAM" id="MobiDB-lite"/>
    </source>
</evidence>
<evidence type="ECO:0000305" key="7"/>
<dbReference type="EC" id="5.6.2.4" evidence="2"/>
<dbReference type="EMBL" id="M26281">
    <property type="protein sequence ID" value="AAA67118.1"/>
    <property type="molecule type" value="Genomic_DNA"/>
</dbReference>
<dbReference type="EMBL" id="X02449">
    <property type="protein sequence ID" value="CAB59361.1"/>
    <property type="molecule type" value="Genomic_DNA"/>
</dbReference>
<dbReference type="PIR" id="A03612">
    <property type="entry name" value="TVVPTH"/>
</dbReference>
<dbReference type="SMR" id="P03075"/>
<dbReference type="Proteomes" id="UP000008477">
    <property type="component" value="Genome"/>
</dbReference>
<dbReference type="GO" id="GO:0042025">
    <property type="term" value="C:host cell nucleus"/>
    <property type="evidence" value="ECO:0007669"/>
    <property type="project" value="UniProtKB-SubCell"/>
</dbReference>
<dbReference type="GO" id="GO:0005524">
    <property type="term" value="F:ATP binding"/>
    <property type="evidence" value="ECO:0007669"/>
    <property type="project" value="UniProtKB-KW"/>
</dbReference>
<dbReference type="GO" id="GO:0016887">
    <property type="term" value="F:ATP hydrolysis activity"/>
    <property type="evidence" value="ECO:0007669"/>
    <property type="project" value="RHEA"/>
</dbReference>
<dbReference type="GO" id="GO:0003688">
    <property type="term" value="F:DNA replication origin binding"/>
    <property type="evidence" value="ECO:0007669"/>
    <property type="project" value="InterPro"/>
</dbReference>
<dbReference type="GO" id="GO:0004386">
    <property type="term" value="F:helicase activity"/>
    <property type="evidence" value="ECO:0007669"/>
    <property type="project" value="UniProtKB-KW"/>
</dbReference>
<dbReference type="GO" id="GO:0008270">
    <property type="term" value="F:zinc ion binding"/>
    <property type="evidence" value="ECO:0007669"/>
    <property type="project" value="UniProtKB-KW"/>
</dbReference>
<dbReference type="GO" id="GO:0006260">
    <property type="term" value="P:DNA replication"/>
    <property type="evidence" value="ECO:0007669"/>
    <property type="project" value="UniProtKB-KW"/>
</dbReference>
<dbReference type="GO" id="GO:0039645">
    <property type="term" value="P:symbiont-mediated perturbation of host cell cycle G1/S transition checkpoint"/>
    <property type="evidence" value="ECO:0007669"/>
    <property type="project" value="UniProtKB-KW"/>
</dbReference>
<dbReference type="GO" id="GO:0052170">
    <property type="term" value="P:symbiont-mediated suppression of host innate immune response"/>
    <property type="evidence" value="ECO:0007669"/>
    <property type="project" value="UniProtKB-KW"/>
</dbReference>
<dbReference type="GO" id="GO:0039576">
    <property type="term" value="P:symbiont-mediated suppression of host JAK-STAT cascade via inhibition of JAK1 activity"/>
    <property type="evidence" value="ECO:0007669"/>
    <property type="project" value="UniProtKB-KW"/>
</dbReference>
<dbReference type="GO" id="GO:0039502">
    <property type="term" value="P:symbiont-mediated suppression of host type I interferon-mediated signaling pathway"/>
    <property type="evidence" value="ECO:0007669"/>
    <property type="project" value="UniProtKB-KW"/>
</dbReference>
<dbReference type="Gene3D" id="3.40.1310.20">
    <property type="match status" value="1"/>
</dbReference>
<dbReference type="Gene3D" id="1.10.287.110">
    <property type="entry name" value="DnaJ domain"/>
    <property type="match status" value="1"/>
</dbReference>
<dbReference type="Gene3D" id="1.20.1050.70">
    <property type="entry name" value="Large T antigen, SV40, domain 3"/>
    <property type="match status" value="1"/>
</dbReference>
<dbReference type="Gene3D" id="3.40.50.300">
    <property type="entry name" value="P-loop containing nucleotide triphosphate hydrolases"/>
    <property type="match status" value="1"/>
</dbReference>
<dbReference type="Gene3D" id="1.10.10.510">
    <property type="entry name" value="Zinc finger, large T-antigen D1 domain"/>
    <property type="match status" value="1"/>
</dbReference>
<dbReference type="InterPro" id="IPR001623">
    <property type="entry name" value="DnaJ_domain"/>
</dbReference>
<dbReference type="InterPro" id="IPR014015">
    <property type="entry name" value="Helicase_SF3_DNA-vir"/>
</dbReference>
<dbReference type="InterPro" id="IPR036869">
    <property type="entry name" value="J_dom_sf"/>
</dbReference>
<dbReference type="InterPro" id="IPR016392">
    <property type="entry name" value="Lg_T_Ag_polyomavir"/>
</dbReference>
<dbReference type="InterPro" id="IPR010932">
    <property type="entry name" value="Lg_T_Ag_Polyomavir_C"/>
</dbReference>
<dbReference type="InterPro" id="IPR027417">
    <property type="entry name" value="P-loop_NTPase"/>
</dbReference>
<dbReference type="InterPro" id="IPR003133">
    <property type="entry name" value="T_Ag_DNA-bd"/>
</dbReference>
<dbReference type="InterPro" id="IPR017910">
    <property type="entry name" value="Znf_lg_T-Ag_D1-typ"/>
</dbReference>
<dbReference type="InterPro" id="IPR037102">
    <property type="entry name" value="Znf_lg_T-Ag_D1_dom_sf"/>
</dbReference>
<dbReference type="Pfam" id="PF06431">
    <property type="entry name" value="Polyoma_lg_T_C"/>
    <property type="match status" value="1"/>
</dbReference>
<dbReference type="Pfam" id="PF02217">
    <property type="entry name" value="T_Ag_DNA_bind"/>
    <property type="match status" value="1"/>
</dbReference>
<dbReference type="PIRSF" id="PIRSF003368">
    <property type="entry name" value="Large_T_antigen_polyomaV"/>
    <property type="match status" value="1"/>
</dbReference>
<dbReference type="SMART" id="SM00271">
    <property type="entry name" value="DnaJ"/>
    <property type="match status" value="1"/>
</dbReference>
<dbReference type="SUPFAM" id="SSF46565">
    <property type="entry name" value="Chaperone J-domain"/>
    <property type="match status" value="1"/>
</dbReference>
<dbReference type="SUPFAM" id="SSF55464">
    <property type="entry name" value="Origin of replication-binding domain, RBD-like"/>
    <property type="match status" value="1"/>
</dbReference>
<dbReference type="SUPFAM" id="SSF52540">
    <property type="entry name" value="P-loop containing nucleoside triphosphate hydrolases"/>
    <property type="match status" value="1"/>
</dbReference>
<dbReference type="PROSITE" id="PS51206">
    <property type="entry name" value="SF3_HELICASE_1"/>
    <property type="match status" value="1"/>
</dbReference>
<dbReference type="PROSITE" id="PS51287">
    <property type="entry name" value="T_AG_OBD"/>
    <property type="match status" value="1"/>
</dbReference>
<dbReference type="PROSITE" id="PS51341">
    <property type="entry name" value="ZF_LTAG_D1"/>
    <property type="match status" value="1"/>
</dbReference>
<keyword id="KW-0007">Acetylation</keyword>
<keyword id="KW-0025">Alternative splicing</keyword>
<keyword id="KW-0067">ATP-binding</keyword>
<keyword id="KW-0235">DNA replication</keyword>
<keyword id="KW-0238">DNA-binding</keyword>
<keyword id="KW-0244">Early protein</keyword>
<keyword id="KW-1078">G1/S host cell cycle checkpoint dysregulation by virus</keyword>
<keyword id="KW-0347">Helicase</keyword>
<keyword id="KW-1048">Host nucleus</keyword>
<keyword id="KW-0945">Host-virus interaction</keyword>
<keyword id="KW-0378">Hydrolase</keyword>
<keyword id="KW-1090">Inhibition of host innate immune response by virus</keyword>
<keyword id="KW-1114">Inhibition of host interferon signaling pathway by virus</keyword>
<keyword id="KW-1096">Inhibition of host JAK1 by virus</keyword>
<keyword id="KW-0922">Interferon antiviral system evasion</keyword>
<keyword id="KW-0413">Isomerase</keyword>
<keyword id="KW-0460">Magnesium</keyword>
<keyword id="KW-0479">Metal-binding</keyword>
<keyword id="KW-1121">Modulation of host cell cycle by virus</keyword>
<keyword id="KW-0547">Nucleotide-binding</keyword>
<keyword id="KW-0553">Oncogene</keyword>
<keyword id="KW-0597">Phosphoprotein</keyword>
<keyword id="KW-1185">Reference proteome</keyword>
<keyword id="KW-0899">Viral immunoevasion</keyword>
<keyword id="KW-0862">Zinc</keyword>
<keyword id="KW-0863">Zinc-finger</keyword>